<name>HISX_HAEI8</name>
<reference key="1">
    <citation type="journal article" date="2005" name="J. Bacteriol.">
        <title>Genomic sequence of an otitis media isolate of nontypeable Haemophilus influenzae: comparative study with H. influenzae serotype d, strain KW20.</title>
        <authorList>
            <person name="Harrison A."/>
            <person name="Dyer D.W."/>
            <person name="Gillaspy A."/>
            <person name="Ray W.C."/>
            <person name="Mungur R."/>
            <person name="Carson M.B."/>
            <person name="Zhong H."/>
            <person name="Gipson J."/>
            <person name="Gipson M."/>
            <person name="Johnson L.S."/>
            <person name="Lewis L."/>
            <person name="Bakaletz L.O."/>
            <person name="Munson R.S. Jr."/>
        </authorList>
    </citation>
    <scope>NUCLEOTIDE SEQUENCE [LARGE SCALE GENOMIC DNA]</scope>
    <source>
        <strain>86-028NP</strain>
    </source>
</reference>
<gene>
    <name evidence="1" type="primary">hisD</name>
    <name type="ordered locus">NTHI0600</name>
</gene>
<protein>
    <recommendedName>
        <fullName evidence="1">Histidinol dehydrogenase</fullName>
        <shortName evidence="1">HDH</shortName>
        <ecNumber evidence="1">1.1.1.23</ecNumber>
    </recommendedName>
</protein>
<dbReference type="EC" id="1.1.1.23" evidence="1"/>
<dbReference type="EMBL" id="CP000057">
    <property type="protein sequence ID" value="AAX87523.1"/>
    <property type="molecule type" value="Genomic_DNA"/>
</dbReference>
<dbReference type="RefSeq" id="WP_011272076.1">
    <property type="nucleotide sequence ID" value="NC_007146.2"/>
</dbReference>
<dbReference type="SMR" id="Q4QN74"/>
<dbReference type="GeneID" id="93219483"/>
<dbReference type="KEGG" id="hit:NTHI0600"/>
<dbReference type="HOGENOM" id="CLU_006732_3_0_6"/>
<dbReference type="UniPathway" id="UPA00031">
    <property type="reaction ID" value="UER00014"/>
</dbReference>
<dbReference type="Proteomes" id="UP000002525">
    <property type="component" value="Chromosome"/>
</dbReference>
<dbReference type="GO" id="GO:0005829">
    <property type="term" value="C:cytosol"/>
    <property type="evidence" value="ECO:0007669"/>
    <property type="project" value="TreeGrafter"/>
</dbReference>
<dbReference type="GO" id="GO:0004399">
    <property type="term" value="F:histidinol dehydrogenase activity"/>
    <property type="evidence" value="ECO:0007669"/>
    <property type="project" value="UniProtKB-UniRule"/>
</dbReference>
<dbReference type="GO" id="GO:0051287">
    <property type="term" value="F:NAD binding"/>
    <property type="evidence" value="ECO:0007669"/>
    <property type="project" value="InterPro"/>
</dbReference>
<dbReference type="GO" id="GO:0008270">
    <property type="term" value="F:zinc ion binding"/>
    <property type="evidence" value="ECO:0007669"/>
    <property type="project" value="UniProtKB-UniRule"/>
</dbReference>
<dbReference type="GO" id="GO:0000105">
    <property type="term" value="P:L-histidine biosynthetic process"/>
    <property type="evidence" value="ECO:0007669"/>
    <property type="project" value="UniProtKB-UniRule"/>
</dbReference>
<dbReference type="CDD" id="cd06572">
    <property type="entry name" value="Histidinol_dh"/>
    <property type="match status" value="1"/>
</dbReference>
<dbReference type="FunFam" id="1.20.5.1300:FF:000001">
    <property type="entry name" value="Histidine biosynthesis trifunctional protein"/>
    <property type="match status" value="1"/>
</dbReference>
<dbReference type="FunFam" id="3.40.50.1980:FF:000001">
    <property type="entry name" value="Histidinol dehydrogenase"/>
    <property type="match status" value="1"/>
</dbReference>
<dbReference type="FunFam" id="3.40.50.1980:FF:000002">
    <property type="entry name" value="Histidinol dehydrogenase, chloroplastic"/>
    <property type="match status" value="1"/>
</dbReference>
<dbReference type="Gene3D" id="1.20.5.1300">
    <property type="match status" value="1"/>
</dbReference>
<dbReference type="Gene3D" id="3.40.50.1980">
    <property type="entry name" value="Nitrogenase molybdenum iron protein domain"/>
    <property type="match status" value="2"/>
</dbReference>
<dbReference type="HAMAP" id="MF_01024">
    <property type="entry name" value="HisD"/>
    <property type="match status" value="1"/>
</dbReference>
<dbReference type="InterPro" id="IPR016161">
    <property type="entry name" value="Ald_DH/histidinol_DH"/>
</dbReference>
<dbReference type="InterPro" id="IPR001692">
    <property type="entry name" value="Histidinol_DH_CS"/>
</dbReference>
<dbReference type="InterPro" id="IPR022695">
    <property type="entry name" value="Histidinol_DH_monofunct"/>
</dbReference>
<dbReference type="InterPro" id="IPR012131">
    <property type="entry name" value="Hstdl_DH"/>
</dbReference>
<dbReference type="NCBIfam" id="TIGR00069">
    <property type="entry name" value="hisD"/>
    <property type="match status" value="1"/>
</dbReference>
<dbReference type="PANTHER" id="PTHR21256:SF2">
    <property type="entry name" value="HISTIDINE BIOSYNTHESIS TRIFUNCTIONAL PROTEIN"/>
    <property type="match status" value="1"/>
</dbReference>
<dbReference type="PANTHER" id="PTHR21256">
    <property type="entry name" value="HISTIDINOL DEHYDROGENASE HDH"/>
    <property type="match status" value="1"/>
</dbReference>
<dbReference type="Pfam" id="PF00815">
    <property type="entry name" value="Histidinol_dh"/>
    <property type="match status" value="1"/>
</dbReference>
<dbReference type="PIRSF" id="PIRSF000099">
    <property type="entry name" value="Histidinol_dh"/>
    <property type="match status" value="1"/>
</dbReference>
<dbReference type="PRINTS" id="PR00083">
    <property type="entry name" value="HOLDHDRGNASE"/>
</dbReference>
<dbReference type="SUPFAM" id="SSF53720">
    <property type="entry name" value="ALDH-like"/>
    <property type="match status" value="1"/>
</dbReference>
<dbReference type="PROSITE" id="PS00611">
    <property type="entry name" value="HISOL_DEHYDROGENASE"/>
    <property type="match status" value="1"/>
</dbReference>
<organism>
    <name type="scientific">Haemophilus influenzae (strain 86-028NP)</name>
    <dbReference type="NCBI Taxonomy" id="281310"/>
    <lineage>
        <taxon>Bacteria</taxon>
        <taxon>Pseudomonadati</taxon>
        <taxon>Pseudomonadota</taxon>
        <taxon>Gammaproteobacteria</taxon>
        <taxon>Pasteurellales</taxon>
        <taxon>Pasteurellaceae</taxon>
        <taxon>Haemophilus</taxon>
    </lineage>
</organism>
<keyword id="KW-0028">Amino-acid biosynthesis</keyword>
<keyword id="KW-0368">Histidine biosynthesis</keyword>
<keyword id="KW-0479">Metal-binding</keyword>
<keyword id="KW-0520">NAD</keyword>
<keyword id="KW-0560">Oxidoreductase</keyword>
<keyword id="KW-0862">Zinc</keyword>
<evidence type="ECO:0000255" key="1">
    <source>
        <dbReference type="HAMAP-Rule" id="MF_01024"/>
    </source>
</evidence>
<accession>Q4QN74</accession>
<feature type="chain" id="PRO_0000135778" description="Histidinol dehydrogenase">
    <location>
        <begin position="1"/>
        <end position="427"/>
    </location>
</feature>
<feature type="active site" description="Proton acceptor" evidence="1">
    <location>
        <position position="321"/>
    </location>
</feature>
<feature type="active site" description="Proton acceptor" evidence="1">
    <location>
        <position position="322"/>
    </location>
</feature>
<feature type="binding site" evidence="1">
    <location>
        <position position="127"/>
    </location>
    <ligand>
        <name>NAD(+)</name>
        <dbReference type="ChEBI" id="CHEBI:57540"/>
    </ligand>
</feature>
<feature type="binding site" evidence="1">
    <location>
        <position position="185"/>
    </location>
    <ligand>
        <name>NAD(+)</name>
        <dbReference type="ChEBI" id="CHEBI:57540"/>
    </ligand>
</feature>
<feature type="binding site" evidence="1">
    <location>
        <position position="208"/>
    </location>
    <ligand>
        <name>NAD(+)</name>
        <dbReference type="ChEBI" id="CHEBI:57540"/>
    </ligand>
</feature>
<feature type="binding site" evidence="1">
    <location>
        <position position="232"/>
    </location>
    <ligand>
        <name>substrate</name>
    </ligand>
</feature>
<feature type="binding site" evidence="1">
    <location>
        <position position="254"/>
    </location>
    <ligand>
        <name>substrate</name>
    </ligand>
</feature>
<feature type="binding site" evidence="1">
    <location>
        <position position="254"/>
    </location>
    <ligand>
        <name>Zn(2+)</name>
        <dbReference type="ChEBI" id="CHEBI:29105"/>
    </ligand>
</feature>
<feature type="binding site" evidence="1">
    <location>
        <position position="257"/>
    </location>
    <ligand>
        <name>substrate</name>
    </ligand>
</feature>
<feature type="binding site" evidence="1">
    <location>
        <position position="257"/>
    </location>
    <ligand>
        <name>Zn(2+)</name>
        <dbReference type="ChEBI" id="CHEBI:29105"/>
    </ligand>
</feature>
<feature type="binding site" evidence="1">
    <location>
        <position position="322"/>
    </location>
    <ligand>
        <name>substrate</name>
    </ligand>
</feature>
<feature type="binding site" evidence="1">
    <location>
        <position position="355"/>
    </location>
    <ligand>
        <name>substrate</name>
    </ligand>
</feature>
<feature type="binding site" evidence="1">
    <location>
        <position position="355"/>
    </location>
    <ligand>
        <name>Zn(2+)</name>
        <dbReference type="ChEBI" id="CHEBI:29105"/>
    </ligand>
</feature>
<feature type="binding site" evidence="1">
    <location>
        <position position="409"/>
    </location>
    <ligand>
        <name>substrate</name>
    </ligand>
</feature>
<feature type="binding site" evidence="1">
    <location>
        <position position="414"/>
    </location>
    <ligand>
        <name>substrate</name>
    </ligand>
</feature>
<feature type="binding site" evidence="1">
    <location>
        <position position="414"/>
    </location>
    <ligand>
        <name>Zn(2+)</name>
        <dbReference type="ChEBI" id="CHEBI:29105"/>
    </ligand>
</feature>
<comment type="function">
    <text evidence="1">Catalyzes the sequential NAD-dependent oxidations of L-histidinol to L-histidinaldehyde and then to L-histidine.</text>
</comment>
<comment type="catalytic activity">
    <reaction evidence="1">
        <text>L-histidinol + 2 NAD(+) + H2O = L-histidine + 2 NADH + 3 H(+)</text>
        <dbReference type="Rhea" id="RHEA:20641"/>
        <dbReference type="ChEBI" id="CHEBI:15377"/>
        <dbReference type="ChEBI" id="CHEBI:15378"/>
        <dbReference type="ChEBI" id="CHEBI:57540"/>
        <dbReference type="ChEBI" id="CHEBI:57595"/>
        <dbReference type="ChEBI" id="CHEBI:57699"/>
        <dbReference type="ChEBI" id="CHEBI:57945"/>
        <dbReference type="EC" id="1.1.1.23"/>
    </reaction>
</comment>
<comment type="cofactor">
    <cofactor evidence="1">
        <name>Zn(2+)</name>
        <dbReference type="ChEBI" id="CHEBI:29105"/>
    </cofactor>
    <text evidence="1">Binds 1 zinc ion per subunit.</text>
</comment>
<comment type="pathway">
    <text evidence="1">Amino-acid biosynthesis; L-histidine biosynthesis; L-histidine from 5-phospho-alpha-D-ribose 1-diphosphate: step 9/9.</text>
</comment>
<comment type="similarity">
    <text evidence="1">Belongs to the histidinol dehydrogenase family.</text>
</comment>
<sequence length="427" mass="46312">MQTIIWNHLSETEKRKVIMRPVQQNGENIQQAVNAIRENVAYNGDRALFELCEKFDGVKLDKLIVSADEIQAASSRISVKLRNAIEQAKTNIEAFHKAQQNQEIDLEIQEGVRCQVVTRPISCVGLYIPGGSAPLFSTVLMLAIPAKIAGCKKIVLCSPPPISDEILYTAHLCGVETIYAIGGAQAVFAMAQGTESVAKVDKIFGPGNAFVTEAKRQVAQNSTAIDMPAGPSEVLVIADESADPEFVASDLLSQAEHGADSQVILVATCETLAKETALAIERQLALLPRAETARKALNHSRIFIAESLEQAVEISNEYAPEHLIVQTKNARKLLPYLDNAGSIFLGAYSPESMGDYASGTNHVLPTYGYTKTYSSLGLADFSKRMTVQELTPKGFKNLAETVEVMAEAEQLAAHKMAVSVRLAKLNI</sequence>
<proteinExistence type="inferred from homology"/>